<organism>
    <name type="scientific">Aspergillus fumigatus (strain ATCC MYA-4609 / CBS 101355 / FGSC A1100 / Af293)</name>
    <name type="common">Neosartorya fumigata</name>
    <dbReference type="NCBI Taxonomy" id="330879"/>
    <lineage>
        <taxon>Eukaryota</taxon>
        <taxon>Fungi</taxon>
        <taxon>Dikarya</taxon>
        <taxon>Ascomycota</taxon>
        <taxon>Pezizomycotina</taxon>
        <taxon>Eurotiomycetes</taxon>
        <taxon>Eurotiomycetidae</taxon>
        <taxon>Eurotiales</taxon>
        <taxon>Aspergillaceae</taxon>
        <taxon>Aspergillus</taxon>
        <taxon>Aspergillus subgen. Fumigati</taxon>
    </lineage>
</organism>
<reference key="1">
    <citation type="submission" date="2003-10" db="EMBL/GenBank/DDBJ databases">
        <title>Genes encoding carboxypeptidases in Aspergillus fumigatus.</title>
        <authorList>
            <person name="Jousson O."/>
            <person name="Monod M."/>
        </authorList>
    </citation>
    <scope>NUCLEOTIDE SEQUENCE [GENOMIC DNA]</scope>
</reference>
<reference key="2">
    <citation type="journal article" date="2005" name="Nature">
        <title>Genomic sequence of the pathogenic and allergenic filamentous fungus Aspergillus fumigatus.</title>
        <authorList>
            <person name="Nierman W.C."/>
            <person name="Pain A."/>
            <person name="Anderson M.J."/>
            <person name="Wortman J.R."/>
            <person name="Kim H.S."/>
            <person name="Arroyo J."/>
            <person name="Berriman M."/>
            <person name="Abe K."/>
            <person name="Archer D.B."/>
            <person name="Bermejo C."/>
            <person name="Bennett J.W."/>
            <person name="Bowyer P."/>
            <person name="Chen D."/>
            <person name="Collins M."/>
            <person name="Coulsen R."/>
            <person name="Davies R."/>
            <person name="Dyer P.S."/>
            <person name="Farman M.L."/>
            <person name="Fedorova N."/>
            <person name="Fedorova N.D."/>
            <person name="Feldblyum T.V."/>
            <person name="Fischer R."/>
            <person name="Fosker N."/>
            <person name="Fraser A."/>
            <person name="Garcia J.L."/>
            <person name="Garcia M.J."/>
            <person name="Goble A."/>
            <person name="Goldman G.H."/>
            <person name="Gomi K."/>
            <person name="Griffith-Jones S."/>
            <person name="Gwilliam R."/>
            <person name="Haas B.J."/>
            <person name="Haas H."/>
            <person name="Harris D.E."/>
            <person name="Horiuchi H."/>
            <person name="Huang J."/>
            <person name="Humphray S."/>
            <person name="Jimenez J."/>
            <person name="Keller N."/>
            <person name="Khouri H."/>
            <person name="Kitamoto K."/>
            <person name="Kobayashi T."/>
            <person name="Konzack S."/>
            <person name="Kulkarni R."/>
            <person name="Kumagai T."/>
            <person name="Lafton A."/>
            <person name="Latge J.-P."/>
            <person name="Li W."/>
            <person name="Lord A."/>
            <person name="Lu C."/>
            <person name="Majoros W.H."/>
            <person name="May G.S."/>
            <person name="Miller B.L."/>
            <person name="Mohamoud Y."/>
            <person name="Molina M."/>
            <person name="Monod M."/>
            <person name="Mouyna I."/>
            <person name="Mulligan S."/>
            <person name="Murphy L.D."/>
            <person name="O'Neil S."/>
            <person name="Paulsen I."/>
            <person name="Penalva M.A."/>
            <person name="Pertea M."/>
            <person name="Price C."/>
            <person name="Pritchard B.L."/>
            <person name="Quail M.A."/>
            <person name="Rabbinowitsch E."/>
            <person name="Rawlins N."/>
            <person name="Rajandream M.A."/>
            <person name="Reichard U."/>
            <person name="Renauld H."/>
            <person name="Robson G.D."/>
            <person name="Rodriguez de Cordoba S."/>
            <person name="Rodriguez-Pena J.M."/>
            <person name="Ronning C.M."/>
            <person name="Rutter S."/>
            <person name="Salzberg S.L."/>
            <person name="Sanchez M."/>
            <person name="Sanchez-Ferrero J.C."/>
            <person name="Saunders D."/>
            <person name="Seeger K."/>
            <person name="Squares R."/>
            <person name="Squares S."/>
            <person name="Takeuchi M."/>
            <person name="Tekaia F."/>
            <person name="Turner G."/>
            <person name="Vazquez de Aldana C.R."/>
            <person name="Weidman J."/>
            <person name="White O."/>
            <person name="Woodward J.R."/>
            <person name="Yu J.-H."/>
            <person name="Fraser C.M."/>
            <person name="Galagan J.E."/>
            <person name="Asai K."/>
            <person name="Machida M."/>
            <person name="Hall N."/>
            <person name="Barrell B.G."/>
            <person name="Denning D.W."/>
        </authorList>
    </citation>
    <scope>NUCLEOTIDE SEQUENCE [LARGE SCALE GENOMIC DNA]</scope>
    <source>
        <strain>ATCC MYA-4609 / CBS 101355 / FGSC A1100 / Af293</strain>
    </source>
</reference>
<gene>
    <name type="primary">cpyA</name>
    <name type="ORF">AFUA_6G13540</name>
</gene>
<evidence type="ECO:0000250" key="1"/>
<evidence type="ECO:0000255" key="2"/>
<evidence type="ECO:0000255" key="3">
    <source>
        <dbReference type="PROSITE-ProRule" id="PRU10074"/>
    </source>
</evidence>
<evidence type="ECO:0000305" key="4"/>
<keyword id="KW-0121">Carboxypeptidase</keyword>
<keyword id="KW-1015">Disulfide bond</keyword>
<keyword id="KW-0325">Glycoprotein</keyword>
<keyword id="KW-0378">Hydrolase</keyword>
<keyword id="KW-0645">Protease</keyword>
<keyword id="KW-1185">Reference proteome</keyword>
<keyword id="KW-0732">Signal</keyword>
<keyword id="KW-0926">Vacuole</keyword>
<keyword id="KW-0865">Zymogen</keyword>
<accession>Q5VJG9</accession>
<accession>E9RBK4</accession>
<accession>Q4WLH2</accession>
<feature type="signal peptide" evidence="2">
    <location>
        <begin position="1"/>
        <end position="17"/>
    </location>
</feature>
<feature type="propeptide" id="PRO_0000407434" evidence="1">
    <location>
        <begin position="18"/>
        <end position="124"/>
    </location>
</feature>
<feature type="chain" id="PRO_0000407435" description="Carboxypeptidase Y homolog A">
    <location>
        <begin position="125"/>
        <end position="543"/>
    </location>
</feature>
<feature type="active site" evidence="3">
    <location>
        <position position="266"/>
    </location>
</feature>
<feature type="active site" evidence="3">
    <location>
        <position position="458"/>
    </location>
</feature>
<feature type="active site" evidence="3">
    <location>
        <position position="520"/>
    </location>
</feature>
<feature type="glycosylation site" description="N-linked (GlcNAc...) asparagine" evidence="2">
    <location>
        <position position="210"/>
    </location>
</feature>
<feature type="glycosylation site" description="N-linked (GlcNAc...) asparagine" evidence="2">
    <location>
        <position position="509"/>
    </location>
</feature>
<feature type="disulfide bond" evidence="1">
    <location>
        <begin position="179"/>
        <end position="419"/>
    </location>
</feature>
<feature type="disulfide bond" evidence="1">
    <location>
        <begin position="313"/>
        <end position="327"/>
    </location>
</feature>
<feature type="disulfide bond" evidence="1">
    <location>
        <begin position="337"/>
        <end position="360"/>
    </location>
</feature>
<feature type="disulfide bond" evidence="1">
    <location>
        <begin position="344"/>
        <end position="353"/>
    </location>
</feature>
<feature type="disulfide bond" evidence="1">
    <location>
        <begin position="382"/>
        <end position="389"/>
    </location>
</feature>
<name>CBPYA_ASPFU</name>
<sequence length="543" mass="60917">MRVLPATLLVGAATAAAPPFQQILGLPKKSADTLAKPLHDLQEQLKTLSGEARHLWDEVASHFPNNMDHNPVFSLPKKHTRRPDSHWDHIVRGADVQSVWVAGASGEKEREIDGKLEAYDLRVKKTDPSALGIDPGVKQYTGYLDDNENDKHLFYWFFESRNDPKNDPVVLWLNGGPGCSSLTGLFLELGPSSINEKIKPIYNDFAWNSNASVIFLDQPVNVGYSYSGAAVSDTVAAGKDVYALLTLFFKQFPEYAKQDFHIAGESYAGHYIPVFASEILSHKKRNINLKSVLIGNGLTDGLTQYDYYRPMACGEGGYPAVLDESSCQSMDNALPRCKSMIESCYNTESSWICVPASIYCNNALLGPYQRTGQNVYDIRGKCEDSSNLCYKGMGYVSEYLNKREVREAVGAEVDGYESCNFDINRNFLFHGDWMKPYHRLVPGLLEQIPVLIYAGDADFICNWLGNKAWTEALEWPGQKEYAPLPLKDLVIEENEHKGKKIGQIKSHGNFTFMRLYGAGHMVPMDQPEASLEFFNRWLGGEWF</sequence>
<comment type="function">
    <text evidence="1">Vacuolar carboxypeptidase involved in degradation of small peptides. Digests preferentially peptides containing an aliphatic or hydrophobic residue in P1' position, as well as methionine, leucine or phenylalanine in P1 position of ester substrate (By similarity).</text>
</comment>
<comment type="catalytic activity">
    <reaction evidence="3">
        <text>Release of a C-terminal amino acid with broad specificity.</text>
        <dbReference type="EC" id="3.4.16.5"/>
    </reaction>
</comment>
<comment type="subcellular location">
    <subcellularLocation>
        <location evidence="1">Vacuole</location>
    </subcellularLocation>
</comment>
<comment type="similarity">
    <text evidence="4">Belongs to the peptidase S10 family.</text>
</comment>
<proteinExistence type="inferred from homology"/>
<dbReference type="EC" id="3.4.16.5"/>
<dbReference type="EMBL" id="AY436353">
    <property type="protein sequence ID" value="AAR96055.1"/>
    <property type="molecule type" value="Genomic_DNA"/>
</dbReference>
<dbReference type="EMBL" id="AAHF01000006">
    <property type="protein sequence ID" value="EAL89192.1"/>
    <property type="molecule type" value="Genomic_DNA"/>
</dbReference>
<dbReference type="RefSeq" id="XP_751230.1">
    <property type="nucleotide sequence ID" value="XM_746137.1"/>
</dbReference>
<dbReference type="SMR" id="Q5VJG9"/>
<dbReference type="FunCoup" id="Q5VJG9">
    <property type="interactions" value="860"/>
</dbReference>
<dbReference type="STRING" id="330879.Q5VJG9"/>
<dbReference type="ESTHER" id="aspfu-CBPYA">
    <property type="family name" value="Carboxypeptidase_S10"/>
</dbReference>
<dbReference type="MEROPS" id="S10.001"/>
<dbReference type="GlyCosmos" id="Q5VJG9">
    <property type="glycosylation" value="2 sites, No reported glycans"/>
</dbReference>
<dbReference type="EnsemblFungi" id="EAL89192">
    <property type="protein sequence ID" value="EAL89192"/>
    <property type="gene ID" value="AFUA_6G13540"/>
</dbReference>
<dbReference type="GeneID" id="3508544"/>
<dbReference type="KEGG" id="afm:AFUA_6G13540"/>
<dbReference type="VEuPathDB" id="FungiDB:Afu6g13540"/>
<dbReference type="eggNOG" id="KOG1282">
    <property type="taxonomic scope" value="Eukaryota"/>
</dbReference>
<dbReference type="HOGENOM" id="CLU_008523_10_4_1"/>
<dbReference type="InParanoid" id="Q5VJG9"/>
<dbReference type="OMA" id="GDWMKPF"/>
<dbReference type="OrthoDB" id="443318at2759"/>
<dbReference type="Proteomes" id="UP000002530">
    <property type="component" value="Chromosome 6"/>
</dbReference>
<dbReference type="GO" id="GO:0000324">
    <property type="term" value="C:fungal-type vacuole"/>
    <property type="evidence" value="ECO:0000318"/>
    <property type="project" value="GO_Central"/>
</dbReference>
<dbReference type="GO" id="GO:0004185">
    <property type="term" value="F:serine-type carboxypeptidase activity"/>
    <property type="evidence" value="ECO:0000318"/>
    <property type="project" value="GO_Central"/>
</dbReference>
<dbReference type="GO" id="GO:0006508">
    <property type="term" value="P:proteolysis"/>
    <property type="evidence" value="ECO:0007669"/>
    <property type="project" value="UniProtKB-KW"/>
</dbReference>
<dbReference type="FunFam" id="1.10.287.410:FF:000001">
    <property type="entry name" value="Carboxypeptidase Y"/>
    <property type="match status" value="1"/>
</dbReference>
<dbReference type="Gene3D" id="1.10.287.410">
    <property type="match status" value="1"/>
</dbReference>
<dbReference type="Gene3D" id="3.40.50.1820">
    <property type="entry name" value="alpha/beta hydrolase"/>
    <property type="match status" value="1"/>
</dbReference>
<dbReference type="InterPro" id="IPR029058">
    <property type="entry name" value="AB_hydrolase_fold"/>
</dbReference>
<dbReference type="InterPro" id="IPR001563">
    <property type="entry name" value="Peptidase_S10"/>
</dbReference>
<dbReference type="InterPro" id="IPR008442">
    <property type="entry name" value="Propeptide_carboxypepY"/>
</dbReference>
<dbReference type="InterPro" id="IPR018202">
    <property type="entry name" value="Ser_caboxypep_ser_AS"/>
</dbReference>
<dbReference type="PANTHER" id="PTHR11802:SF113">
    <property type="entry name" value="SERINE CARBOXYPEPTIDASE CTSA-4.1"/>
    <property type="match status" value="1"/>
</dbReference>
<dbReference type="PANTHER" id="PTHR11802">
    <property type="entry name" value="SERINE PROTEASE FAMILY S10 SERINE CARBOXYPEPTIDASE"/>
    <property type="match status" value="1"/>
</dbReference>
<dbReference type="Pfam" id="PF05388">
    <property type="entry name" value="Carbpep_Y_N"/>
    <property type="match status" value="1"/>
</dbReference>
<dbReference type="Pfam" id="PF00450">
    <property type="entry name" value="Peptidase_S10"/>
    <property type="match status" value="1"/>
</dbReference>
<dbReference type="PRINTS" id="PR00724">
    <property type="entry name" value="CRBOXYPTASEC"/>
</dbReference>
<dbReference type="SUPFAM" id="SSF53474">
    <property type="entry name" value="alpha/beta-Hydrolases"/>
    <property type="match status" value="1"/>
</dbReference>
<dbReference type="PROSITE" id="PS00131">
    <property type="entry name" value="CARBOXYPEPT_SER_SER"/>
    <property type="match status" value="1"/>
</dbReference>
<protein>
    <recommendedName>
        <fullName>Carboxypeptidase Y homolog A</fullName>
        <ecNumber>3.4.16.5</ecNumber>
    </recommendedName>
    <alternativeName>
        <fullName>Carboxypeptidase 3</fullName>
    </alternativeName>
</protein>